<name>MURC_SALA4</name>
<dbReference type="EC" id="6.3.2.8" evidence="1"/>
<dbReference type="EMBL" id="CP001138">
    <property type="protein sequence ID" value="ACH48746.1"/>
    <property type="molecule type" value="Genomic_DNA"/>
</dbReference>
<dbReference type="RefSeq" id="WP_001096072.1">
    <property type="nucleotide sequence ID" value="NC_011149.1"/>
</dbReference>
<dbReference type="SMR" id="B5F7W5"/>
<dbReference type="KEGG" id="sea:SeAg_B0146"/>
<dbReference type="HOGENOM" id="CLU_028104_2_2_6"/>
<dbReference type="UniPathway" id="UPA00219"/>
<dbReference type="Proteomes" id="UP000008819">
    <property type="component" value="Chromosome"/>
</dbReference>
<dbReference type="GO" id="GO:0005737">
    <property type="term" value="C:cytoplasm"/>
    <property type="evidence" value="ECO:0007669"/>
    <property type="project" value="UniProtKB-SubCell"/>
</dbReference>
<dbReference type="GO" id="GO:0005524">
    <property type="term" value="F:ATP binding"/>
    <property type="evidence" value="ECO:0007669"/>
    <property type="project" value="UniProtKB-UniRule"/>
</dbReference>
<dbReference type="GO" id="GO:0008763">
    <property type="term" value="F:UDP-N-acetylmuramate-L-alanine ligase activity"/>
    <property type="evidence" value="ECO:0007669"/>
    <property type="project" value="UniProtKB-UniRule"/>
</dbReference>
<dbReference type="GO" id="GO:0051301">
    <property type="term" value="P:cell division"/>
    <property type="evidence" value="ECO:0007669"/>
    <property type="project" value="UniProtKB-KW"/>
</dbReference>
<dbReference type="GO" id="GO:0071555">
    <property type="term" value="P:cell wall organization"/>
    <property type="evidence" value="ECO:0007669"/>
    <property type="project" value="UniProtKB-KW"/>
</dbReference>
<dbReference type="GO" id="GO:0009252">
    <property type="term" value="P:peptidoglycan biosynthetic process"/>
    <property type="evidence" value="ECO:0007669"/>
    <property type="project" value="UniProtKB-UniRule"/>
</dbReference>
<dbReference type="GO" id="GO:0008360">
    <property type="term" value="P:regulation of cell shape"/>
    <property type="evidence" value="ECO:0007669"/>
    <property type="project" value="UniProtKB-KW"/>
</dbReference>
<dbReference type="FunFam" id="3.40.1190.10:FF:000001">
    <property type="entry name" value="UDP-N-acetylmuramate--L-alanine ligase"/>
    <property type="match status" value="1"/>
</dbReference>
<dbReference type="FunFam" id="3.40.50.720:FF:000046">
    <property type="entry name" value="UDP-N-acetylmuramate--L-alanine ligase"/>
    <property type="match status" value="1"/>
</dbReference>
<dbReference type="FunFam" id="3.90.190.20:FF:000001">
    <property type="entry name" value="UDP-N-acetylmuramate--L-alanine ligase"/>
    <property type="match status" value="1"/>
</dbReference>
<dbReference type="Gene3D" id="3.90.190.20">
    <property type="entry name" value="Mur ligase, C-terminal domain"/>
    <property type="match status" value="1"/>
</dbReference>
<dbReference type="Gene3D" id="3.40.1190.10">
    <property type="entry name" value="Mur-like, catalytic domain"/>
    <property type="match status" value="1"/>
</dbReference>
<dbReference type="Gene3D" id="3.40.50.720">
    <property type="entry name" value="NAD(P)-binding Rossmann-like Domain"/>
    <property type="match status" value="1"/>
</dbReference>
<dbReference type="HAMAP" id="MF_00046">
    <property type="entry name" value="MurC"/>
    <property type="match status" value="1"/>
</dbReference>
<dbReference type="InterPro" id="IPR036565">
    <property type="entry name" value="Mur-like_cat_sf"/>
</dbReference>
<dbReference type="InterPro" id="IPR004101">
    <property type="entry name" value="Mur_ligase_C"/>
</dbReference>
<dbReference type="InterPro" id="IPR036615">
    <property type="entry name" value="Mur_ligase_C_dom_sf"/>
</dbReference>
<dbReference type="InterPro" id="IPR013221">
    <property type="entry name" value="Mur_ligase_cen"/>
</dbReference>
<dbReference type="InterPro" id="IPR000713">
    <property type="entry name" value="Mur_ligase_N"/>
</dbReference>
<dbReference type="InterPro" id="IPR050061">
    <property type="entry name" value="MurCDEF_pg_biosynth"/>
</dbReference>
<dbReference type="InterPro" id="IPR005758">
    <property type="entry name" value="UDP-N-AcMur_Ala_ligase_MurC"/>
</dbReference>
<dbReference type="NCBIfam" id="TIGR01082">
    <property type="entry name" value="murC"/>
    <property type="match status" value="1"/>
</dbReference>
<dbReference type="PANTHER" id="PTHR43445:SF3">
    <property type="entry name" value="UDP-N-ACETYLMURAMATE--L-ALANINE LIGASE"/>
    <property type="match status" value="1"/>
</dbReference>
<dbReference type="PANTHER" id="PTHR43445">
    <property type="entry name" value="UDP-N-ACETYLMURAMATE--L-ALANINE LIGASE-RELATED"/>
    <property type="match status" value="1"/>
</dbReference>
<dbReference type="Pfam" id="PF01225">
    <property type="entry name" value="Mur_ligase"/>
    <property type="match status" value="1"/>
</dbReference>
<dbReference type="Pfam" id="PF02875">
    <property type="entry name" value="Mur_ligase_C"/>
    <property type="match status" value="1"/>
</dbReference>
<dbReference type="Pfam" id="PF08245">
    <property type="entry name" value="Mur_ligase_M"/>
    <property type="match status" value="1"/>
</dbReference>
<dbReference type="SUPFAM" id="SSF51984">
    <property type="entry name" value="MurCD N-terminal domain"/>
    <property type="match status" value="1"/>
</dbReference>
<dbReference type="SUPFAM" id="SSF53623">
    <property type="entry name" value="MurD-like peptide ligases, catalytic domain"/>
    <property type="match status" value="1"/>
</dbReference>
<dbReference type="SUPFAM" id="SSF53244">
    <property type="entry name" value="MurD-like peptide ligases, peptide-binding domain"/>
    <property type="match status" value="1"/>
</dbReference>
<sequence>MNTQQLAKLRSIVPEMRRVRHIHFVGIGGAGMGGIAEVLANEGYQISGSDLAPNPVTQQLTSLGATIFFNHRPENVRDASVVVVSSAISADNPEIVAAHEARIPVIRRAEMLAELMRFRHGIAIAGTHGKTTTTAMVSSIYAEAGLDPTFVNGGLVKAAGVHARLGHSRYLIAEADESDASFLHLQPMVAIVTNIEADHMDTYHGDFENLKQTFINFLHNLPFYGRAVMCVDDPVIRELLPRVGRQTTTYGFSEDADVRVEDYQQIGPQGHFTLLRQGMPDLHVTLNAPGRHNALNAAAAVAVATEEGIDDDAILRALESFQGTGRRFDFLGEFPLEPVNGKAGTAMLVDDYGHHPTEVDATIKAARAGWPDKNLVMLFQPHRYTRTRDLYDDFANVLTQVDALLMLDVYPAGEAPIPGADSRSLCRTIRNRGKIDPILVSDPAQVATMLAPVLTGNDLILVQGAGNVGKIARYLSEIKLKPQIQEEEQHG</sequence>
<organism>
    <name type="scientific">Salmonella agona (strain SL483)</name>
    <dbReference type="NCBI Taxonomy" id="454166"/>
    <lineage>
        <taxon>Bacteria</taxon>
        <taxon>Pseudomonadati</taxon>
        <taxon>Pseudomonadota</taxon>
        <taxon>Gammaproteobacteria</taxon>
        <taxon>Enterobacterales</taxon>
        <taxon>Enterobacteriaceae</taxon>
        <taxon>Salmonella</taxon>
    </lineage>
</organism>
<keyword id="KW-0067">ATP-binding</keyword>
<keyword id="KW-0131">Cell cycle</keyword>
<keyword id="KW-0132">Cell division</keyword>
<keyword id="KW-0133">Cell shape</keyword>
<keyword id="KW-0961">Cell wall biogenesis/degradation</keyword>
<keyword id="KW-0963">Cytoplasm</keyword>
<keyword id="KW-0436">Ligase</keyword>
<keyword id="KW-0547">Nucleotide-binding</keyword>
<keyword id="KW-0573">Peptidoglycan synthesis</keyword>
<reference key="1">
    <citation type="journal article" date="2011" name="J. Bacteriol.">
        <title>Comparative genomics of 28 Salmonella enterica isolates: evidence for CRISPR-mediated adaptive sublineage evolution.</title>
        <authorList>
            <person name="Fricke W.F."/>
            <person name="Mammel M.K."/>
            <person name="McDermott P.F."/>
            <person name="Tartera C."/>
            <person name="White D.G."/>
            <person name="Leclerc J.E."/>
            <person name="Ravel J."/>
            <person name="Cebula T.A."/>
        </authorList>
    </citation>
    <scope>NUCLEOTIDE SEQUENCE [LARGE SCALE GENOMIC DNA]</scope>
    <source>
        <strain>SL483</strain>
    </source>
</reference>
<proteinExistence type="inferred from homology"/>
<protein>
    <recommendedName>
        <fullName evidence="1">UDP-N-acetylmuramate--L-alanine ligase</fullName>
        <ecNumber evidence="1">6.3.2.8</ecNumber>
    </recommendedName>
    <alternativeName>
        <fullName evidence="1">UDP-N-acetylmuramoyl-L-alanine synthetase</fullName>
    </alternativeName>
</protein>
<accession>B5F7W5</accession>
<feature type="chain" id="PRO_1000091128" description="UDP-N-acetylmuramate--L-alanine ligase">
    <location>
        <begin position="1"/>
        <end position="491"/>
    </location>
</feature>
<feature type="binding site" evidence="1">
    <location>
        <begin position="126"/>
        <end position="132"/>
    </location>
    <ligand>
        <name>ATP</name>
        <dbReference type="ChEBI" id="CHEBI:30616"/>
    </ligand>
</feature>
<evidence type="ECO:0000255" key="1">
    <source>
        <dbReference type="HAMAP-Rule" id="MF_00046"/>
    </source>
</evidence>
<gene>
    <name evidence="1" type="primary">murC</name>
    <name type="ordered locus">SeAg_B0146</name>
</gene>
<comment type="function">
    <text evidence="1">Cell wall formation.</text>
</comment>
<comment type="catalytic activity">
    <reaction evidence="1">
        <text>UDP-N-acetyl-alpha-D-muramate + L-alanine + ATP = UDP-N-acetyl-alpha-D-muramoyl-L-alanine + ADP + phosphate + H(+)</text>
        <dbReference type="Rhea" id="RHEA:23372"/>
        <dbReference type="ChEBI" id="CHEBI:15378"/>
        <dbReference type="ChEBI" id="CHEBI:30616"/>
        <dbReference type="ChEBI" id="CHEBI:43474"/>
        <dbReference type="ChEBI" id="CHEBI:57972"/>
        <dbReference type="ChEBI" id="CHEBI:70757"/>
        <dbReference type="ChEBI" id="CHEBI:83898"/>
        <dbReference type="ChEBI" id="CHEBI:456216"/>
        <dbReference type="EC" id="6.3.2.8"/>
    </reaction>
</comment>
<comment type="pathway">
    <text evidence="1">Cell wall biogenesis; peptidoglycan biosynthesis.</text>
</comment>
<comment type="subcellular location">
    <subcellularLocation>
        <location evidence="1">Cytoplasm</location>
    </subcellularLocation>
</comment>
<comment type="similarity">
    <text evidence="1">Belongs to the MurCDEF family.</text>
</comment>